<gene>
    <name type="primary">ccdc79</name>
    <name evidence="1" type="synonym">terb1</name>
    <name type="ORF">si:dkey-238c7.7</name>
    <name type="ORF">si:dkey-30c15.5</name>
</gene>
<keyword id="KW-0158">Chromosome</keyword>
<keyword id="KW-0175">Coiled coil</keyword>
<keyword id="KW-0469">Meiosis</keyword>
<keyword id="KW-0472">Membrane</keyword>
<keyword id="KW-0539">Nucleus</keyword>
<keyword id="KW-0597">Phosphoprotein</keyword>
<keyword id="KW-1185">Reference proteome</keyword>
<keyword id="KW-0677">Repeat</keyword>
<keyword id="KW-0779">Telomere</keyword>
<protein>
    <recommendedName>
        <fullName evidence="1">Telomere repeats-binding bouquet formation protein 1</fullName>
    </recommendedName>
    <alternativeName>
        <fullName>Coiled-coil domain-containing protein 79</fullName>
    </alternativeName>
</protein>
<dbReference type="EMBL" id="BX470218">
    <property type="protein sequence ID" value="CAK10982.2"/>
    <property type="molecule type" value="Genomic_DNA"/>
</dbReference>
<dbReference type="EMBL" id="BX571879">
    <property type="protein sequence ID" value="CAM56625.1"/>
    <property type="molecule type" value="Genomic_DNA"/>
</dbReference>
<dbReference type="RefSeq" id="NP_001082851.1">
    <property type="nucleotide sequence ID" value="NM_001089382.1"/>
</dbReference>
<dbReference type="SMR" id="Q1LX29"/>
<dbReference type="FunCoup" id="Q1LX29">
    <property type="interactions" value="636"/>
</dbReference>
<dbReference type="STRING" id="7955.ENSDARP00000118262"/>
<dbReference type="PaxDb" id="7955-ENSDARP00000118262"/>
<dbReference type="Ensembl" id="ENSDART00000081468">
    <property type="protein sequence ID" value="ENSDARP00000075909"/>
    <property type="gene ID" value="ENSDARG00000058587"/>
</dbReference>
<dbReference type="Ensembl" id="ENSDART00000142270">
    <property type="protein sequence ID" value="ENSDARP00000118262"/>
    <property type="gene ID" value="ENSDARG00000058587"/>
</dbReference>
<dbReference type="GeneID" id="559140"/>
<dbReference type="KEGG" id="dre:559140"/>
<dbReference type="AGR" id="ZFIN:ZDB-GENE-060503-732"/>
<dbReference type="CTD" id="283847"/>
<dbReference type="ZFIN" id="ZDB-GENE-060503-732">
    <property type="gene designation" value="terb1"/>
</dbReference>
<dbReference type="eggNOG" id="ENOG502QQER">
    <property type="taxonomic scope" value="Eukaryota"/>
</dbReference>
<dbReference type="HOGENOM" id="CLU_022991_1_0_1"/>
<dbReference type="InParanoid" id="Q1LX29"/>
<dbReference type="OMA" id="ECLKHQM"/>
<dbReference type="OrthoDB" id="608866at2759"/>
<dbReference type="PhylomeDB" id="Q1LX29"/>
<dbReference type="TreeFam" id="TF335845"/>
<dbReference type="PRO" id="PR:Q1LX29"/>
<dbReference type="Proteomes" id="UP000000437">
    <property type="component" value="Alternate scaffold 18"/>
</dbReference>
<dbReference type="Proteomes" id="UP000000437">
    <property type="component" value="Chromosome 18"/>
</dbReference>
<dbReference type="Bgee" id="ENSDARG00000058587">
    <property type="expression patterns" value="Expressed in testis and 7 other cell types or tissues"/>
</dbReference>
<dbReference type="GO" id="GO:0000781">
    <property type="term" value="C:chromosome, telomeric region"/>
    <property type="evidence" value="ECO:0000250"/>
    <property type="project" value="UniProtKB"/>
</dbReference>
<dbReference type="GO" id="GO:0005637">
    <property type="term" value="C:nuclear inner membrane"/>
    <property type="evidence" value="ECO:0000250"/>
    <property type="project" value="UniProtKB"/>
</dbReference>
<dbReference type="GO" id="GO:0007129">
    <property type="term" value="P:homologous chromosome pairing at meiosis"/>
    <property type="evidence" value="ECO:0000250"/>
    <property type="project" value="UniProtKB"/>
</dbReference>
<dbReference type="GO" id="GO:0070197">
    <property type="term" value="P:meiotic attachment of telomere to nuclear envelope"/>
    <property type="evidence" value="ECO:0000250"/>
    <property type="project" value="UniProtKB"/>
</dbReference>
<dbReference type="GO" id="GO:0045141">
    <property type="term" value="P:meiotic telomere clustering"/>
    <property type="evidence" value="ECO:0000250"/>
    <property type="project" value="UniProtKB"/>
</dbReference>
<dbReference type="CDD" id="cd11658">
    <property type="entry name" value="SANT_DMAP1_like"/>
    <property type="match status" value="1"/>
</dbReference>
<dbReference type="Gene3D" id="1.10.10.60">
    <property type="entry name" value="Homeodomain-like"/>
    <property type="match status" value="1"/>
</dbReference>
<dbReference type="Gene3D" id="1.25.10.10">
    <property type="entry name" value="Leucine-rich Repeat Variant"/>
    <property type="match status" value="1"/>
</dbReference>
<dbReference type="InterPro" id="IPR011989">
    <property type="entry name" value="ARM-like"/>
</dbReference>
<dbReference type="InterPro" id="IPR016024">
    <property type="entry name" value="ARM-type_fold"/>
</dbReference>
<dbReference type="InterPro" id="IPR009057">
    <property type="entry name" value="Homeodomain-like_sf"/>
</dbReference>
<dbReference type="InterPro" id="IPR001005">
    <property type="entry name" value="SANT/Myb"/>
</dbReference>
<dbReference type="InterPro" id="IPR042359">
    <property type="entry name" value="TERB1"/>
</dbReference>
<dbReference type="PANTHER" id="PTHR14014">
    <property type="entry name" value="TELOMERE REPEATS-BINDING BOUQUET FORMATION PROTEIN 1"/>
    <property type="match status" value="1"/>
</dbReference>
<dbReference type="PANTHER" id="PTHR14014:SF0">
    <property type="entry name" value="TELOMERE REPEATS-BINDING BOUQUET FORMATION PROTEIN 1"/>
    <property type="match status" value="1"/>
</dbReference>
<dbReference type="SMART" id="SM00717">
    <property type="entry name" value="SANT"/>
    <property type="match status" value="1"/>
</dbReference>
<dbReference type="SUPFAM" id="SSF48371">
    <property type="entry name" value="ARM repeat"/>
    <property type="match status" value="1"/>
</dbReference>
<dbReference type="SUPFAM" id="SSF46689">
    <property type="entry name" value="Homeodomain-like"/>
    <property type="match status" value="1"/>
</dbReference>
<comment type="function">
    <text evidence="1">Meiosis-specific telomere-associated protein involved in meiotic telomere attachment to the nucleus inner membrane, a crucial step for homologous pairing and synapsis. Component of the MAJIN-TERB1-TERB2 complex, which promotes telomere cap exchange by mediating attachment of telomeric DNA to the inner nuclear membrane and replacement of the protective cap of telomeric chromosomes: in early meiosis, the MAJIN-TERB1-TERB2 complex associates with telomeric DNA and the shelterin/telosome complex. During prophase, the complex matures and promotes release of the shelterin/telosome complex from telomeric DNA. In the MAJIN-TERB1-TERB2 complex, TERB1 probably mediates association with the shelterin/telosome complex.</text>
</comment>
<comment type="subunit">
    <text evidence="1">Component of the MAJIN-TERB1-TERB2 complex.</text>
</comment>
<comment type="subcellular location">
    <subcellularLocation>
        <location evidence="1">Chromosome</location>
        <location evidence="1">Telomere</location>
    </subcellularLocation>
    <subcellularLocation>
        <location evidence="1">Nucleus inner membrane</location>
    </subcellularLocation>
    <text evidence="1">Localizes to telomeres during meiotic prophase. In leptotene spermatocytes, localizes to telomeres that localize to the nucleus inner membrane.</text>
</comment>
<comment type="similarity">
    <text evidence="4">Belongs to the TERB1 family.</text>
</comment>
<proteinExistence type="inferred from homology"/>
<accession>Q1LX29</accession>
<accession>A3KQ98</accession>
<feature type="chain" id="PRO_0000320159" description="Telomere repeats-binding bouquet formation protein 1">
    <location>
        <begin position="1"/>
        <end position="814"/>
    </location>
</feature>
<feature type="repeat" description="ARM 1">
    <location>
        <begin position="93"/>
        <end position="136"/>
    </location>
</feature>
<feature type="repeat" description="ARM 2">
    <location>
        <begin position="327"/>
        <end position="368"/>
    </location>
</feature>
<feature type="domain" description="Myb-like">
    <location>
        <begin position="746"/>
        <end position="799"/>
    </location>
</feature>
<feature type="region of interest" description="Disordered" evidence="3">
    <location>
        <begin position="461"/>
        <end position="521"/>
    </location>
</feature>
<feature type="region of interest" description="Disordered" evidence="3">
    <location>
        <begin position="551"/>
        <end position="584"/>
    </location>
</feature>
<feature type="region of interest" description="Disordered" evidence="3">
    <location>
        <begin position="653"/>
        <end position="753"/>
    </location>
</feature>
<feature type="coiled-coil region" evidence="2">
    <location>
        <begin position="488"/>
        <end position="512"/>
    </location>
</feature>
<feature type="compositionally biased region" description="Basic and acidic residues" evidence="3">
    <location>
        <begin position="499"/>
        <end position="521"/>
    </location>
</feature>
<feature type="compositionally biased region" description="Basic and acidic residues" evidence="3">
    <location>
        <begin position="565"/>
        <end position="577"/>
    </location>
</feature>
<feature type="compositionally biased region" description="Basic and acidic residues" evidence="3">
    <location>
        <begin position="679"/>
        <end position="688"/>
    </location>
</feature>
<feature type="compositionally biased region" description="Basic residues" evidence="3">
    <location>
        <begin position="689"/>
        <end position="699"/>
    </location>
</feature>
<feature type="compositionally biased region" description="Basic and acidic residues" evidence="3">
    <location>
        <begin position="714"/>
        <end position="741"/>
    </location>
</feature>
<feature type="sequence conflict" description="In Ref. 1; CAM56625." evidence="4" ref="1">
    <original>R</original>
    <variation>Q</variation>
    <location>
        <position position="96"/>
    </location>
</feature>
<feature type="sequence conflict" description="In Ref. 1; CAM56625." evidence="4" ref="1">
    <original>S</original>
    <variation>N</variation>
    <location>
        <position position="148"/>
    </location>
</feature>
<feature type="sequence conflict" description="In Ref. 1; CAM56625." evidence="4" ref="1">
    <original>I</original>
    <variation>T</variation>
    <location>
        <position position="163"/>
    </location>
</feature>
<feature type="sequence conflict" description="In Ref. 1; CAM56625." evidence="4" ref="1">
    <original>T</original>
    <variation>P</variation>
    <location>
        <position position="368"/>
    </location>
</feature>
<feature type="sequence conflict" description="In Ref. 1; CAM56625." evidence="4" ref="1">
    <original>K</original>
    <variation>E</variation>
    <location>
        <position position="494"/>
    </location>
</feature>
<feature type="sequence conflict" description="In Ref. 1; CAM56625." evidence="4" ref="1">
    <original>F</original>
    <variation>Y</variation>
    <location>
        <position position="600"/>
    </location>
</feature>
<feature type="sequence conflict" description="In Ref. 1; CAM56625." evidence="4" ref="1">
    <original>T</original>
    <variation>A</variation>
    <location>
        <position position="645"/>
    </location>
</feature>
<feature type="sequence conflict" description="In Ref. 1; CAM56625." evidence="4" ref="1">
    <original>I</original>
    <variation>N</variation>
    <location>
        <position position="677"/>
    </location>
</feature>
<feature type="sequence conflict" description="In Ref. 1; CAM56625." evidence="4" ref="1">
    <original>R</original>
    <variation>K</variation>
    <location>
        <position position="713"/>
    </location>
</feature>
<feature type="sequence conflict" description="In Ref. 1; CAM56625." evidence="4" ref="1">
    <original>V</original>
    <variation>M</variation>
    <location>
        <position position="723"/>
    </location>
</feature>
<feature type="sequence conflict" description="In Ref. 1; CAM56625." evidence="4" ref="1">
    <original>D</original>
    <variation>E</variation>
    <location>
        <position position="728"/>
    </location>
</feature>
<feature type="sequence conflict" description="In Ref. 1; CAM56625." evidence="4" ref="1">
    <original>A</original>
    <variation>T</variation>
    <location>
        <position position="739"/>
    </location>
</feature>
<evidence type="ECO:0000250" key="1">
    <source>
        <dbReference type="UniProtKB" id="Q8C0V1"/>
    </source>
</evidence>
<evidence type="ECO:0000255" key="2"/>
<evidence type="ECO:0000256" key="3">
    <source>
        <dbReference type="SAM" id="MobiDB-lite"/>
    </source>
</evidence>
<evidence type="ECO:0000305" key="4"/>
<organism>
    <name type="scientific">Danio rerio</name>
    <name type="common">Zebrafish</name>
    <name type="synonym">Brachydanio rerio</name>
    <dbReference type="NCBI Taxonomy" id="7955"/>
    <lineage>
        <taxon>Eukaryota</taxon>
        <taxon>Metazoa</taxon>
        <taxon>Chordata</taxon>
        <taxon>Craniata</taxon>
        <taxon>Vertebrata</taxon>
        <taxon>Euteleostomi</taxon>
        <taxon>Actinopterygii</taxon>
        <taxon>Neopterygii</taxon>
        <taxon>Teleostei</taxon>
        <taxon>Ostariophysi</taxon>
        <taxon>Cypriniformes</taxon>
        <taxon>Danionidae</taxon>
        <taxon>Danioninae</taxon>
        <taxon>Danio</taxon>
    </lineage>
</organism>
<reference key="1">
    <citation type="journal article" date="2013" name="Nature">
        <title>The zebrafish reference genome sequence and its relationship to the human genome.</title>
        <authorList>
            <person name="Howe K."/>
            <person name="Clark M.D."/>
            <person name="Torroja C.F."/>
            <person name="Torrance J."/>
            <person name="Berthelot C."/>
            <person name="Muffato M."/>
            <person name="Collins J.E."/>
            <person name="Humphray S."/>
            <person name="McLaren K."/>
            <person name="Matthews L."/>
            <person name="McLaren S."/>
            <person name="Sealy I."/>
            <person name="Caccamo M."/>
            <person name="Churcher C."/>
            <person name="Scott C."/>
            <person name="Barrett J.C."/>
            <person name="Koch R."/>
            <person name="Rauch G.J."/>
            <person name="White S."/>
            <person name="Chow W."/>
            <person name="Kilian B."/>
            <person name="Quintais L.T."/>
            <person name="Guerra-Assuncao J.A."/>
            <person name="Zhou Y."/>
            <person name="Gu Y."/>
            <person name="Yen J."/>
            <person name="Vogel J.H."/>
            <person name="Eyre T."/>
            <person name="Redmond S."/>
            <person name="Banerjee R."/>
            <person name="Chi J."/>
            <person name="Fu B."/>
            <person name="Langley E."/>
            <person name="Maguire S.F."/>
            <person name="Laird G.K."/>
            <person name="Lloyd D."/>
            <person name="Kenyon E."/>
            <person name="Donaldson S."/>
            <person name="Sehra H."/>
            <person name="Almeida-King J."/>
            <person name="Loveland J."/>
            <person name="Trevanion S."/>
            <person name="Jones M."/>
            <person name="Quail M."/>
            <person name="Willey D."/>
            <person name="Hunt A."/>
            <person name="Burton J."/>
            <person name="Sims S."/>
            <person name="McLay K."/>
            <person name="Plumb B."/>
            <person name="Davis J."/>
            <person name="Clee C."/>
            <person name="Oliver K."/>
            <person name="Clark R."/>
            <person name="Riddle C."/>
            <person name="Elliot D."/>
            <person name="Threadgold G."/>
            <person name="Harden G."/>
            <person name="Ware D."/>
            <person name="Begum S."/>
            <person name="Mortimore B."/>
            <person name="Kerry G."/>
            <person name="Heath P."/>
            <person name="Phillimore B."/>
            <person name="Tracey A."/>
            <person name="Corby N."/>
            <person name="Dunn M."/>
            <person name="Johnson C."/>
            <person name="Wood J."/>
            <person name="Clark S."/>
            <person name="Pelan S."/>
            <person name="Griffiths G."/>
            <person name="Smith M."/>
            <person name="Glithero R."/>
            <person name="Howden P."/>
            <person name="Barker N."/>
            <person name="Lloyd C."/>
            <person name="Stevens C."/>
            <person name="Harley J."/>
            <person name="Holt K."/>
            <person name="Panagiotidis G."/>
            <person name="Lovell J."/>
            <person name="Beasley H."/>
            <person name="Henderson C."/>
            <person name="Gordon D."/>
            <person name="Auger K."/>
            <person name="Wright D."/>
            <person name="Collins J."/>
            <person name="Raisen C."/>
            <person name="Dyer L."/>
            <person name="Leung K."/>
            <person name="Robertson L."/>
            <person name="Ambridge K."/>
            <person name="Leongamornlert D."/>
            <person name="McGuire S."/>
            <person name="Gilderthorp R."/>
            <person name="Griffiths C."/>
            <person name="Manthravadi D."/>
            <person name="Nichol S."/>
            <person name="Barker G."/>
            <person name="Whitehead S."/>
            <person name="Kay M."/>
            <person name="Brown J."/>
            <person name="Murnane C."/>
            <person name="Gray E."/>
            <person name="Humphries M."/>
            <person name="Sycamore N."/>
            <person name="Barker D."/>
            <person name="Saunders D."/>
            <person name="Wallis J."/>
            <person name="Babbage A."/>
            <person name="Hammond S."/>
            <person name="Mashreghi-Mohammadi M."/>
            <person name="Barr L."/>
            <person name="Martin S."/>
            <person name="Wray P."/>
            <person name="Ellington A."/>
            <person name="Matthews N."/>
            <person name="Ellwood M."/>
            <person name="Woodmansey R."/>
            <person name="Clark G."/>
            <person name="Cooper J."/>
            <person name="Tromans A."/>
            <person name="Grafham D."/>
            <person name="Skuce C."/>
            <person name="Pandian R."/>
            <person name="Andrews R."/>
            <person name="Harrison E."/>
            <person name="Kimberley A."/>
            <person name="Garnett J."/>
            <person name="Fosker N."/>
            <person name="Hall R."/>
            <person name="Garner P."/>
            <person name="Kelly D."/>
            <person name="Bird C."/>
            <person name="Palmer S."/>
            <person name="Gehring I."/>
            <person name="Berger A."/>
            <person name="Dooley C.M."/>
            <person name="Ersan-Urun Z."/>
            <person name="Eser C."/>
            <person name="Geiger H."/>
            <person name="Geisler M."/>
            <person name="Karotki L."/>
            <person name="Kirn A."/>
            <person name="Konantz J."/>
            <person name="Konantz M."/>
            <person name="Oberlander M."/>
            <person name="Rudolph-Geiger S."/>
            <person name="Teucke M."/>
            <person name="Lanz C."/>
            <person name="Raddatz G."/>
            <person name="Osoegawa K."/>
            <person name="Zhu B."/>
            <person name="Rapp A."/>
            <person name="Widaa S."/>
            <person name="Langford C."/>
            <person name="Yang F."/>
            <person name="Schuster S.C."/>
            <person name="Carter N.P."/>
            <person name="Harrow J."/>
            <person name="Ning Z."/>
            <person name="Herrero J."/>
            <person name="Searle S.M."/>
            <person name="Enright A."/>
            <person name="Geisler R."/>
            <person name="Plasterk R.H."/>
            <person name="Lee C."/>
            <person name="Westerfield M."/>
            <person name="de Jong P.J."/>
            <person name="Zon L.I."/>
            <person name="Postlethwait J.H."/>
            <person name="Nusslein-Volhard C."/>
            <person name="Hubbard T.J."/>
            <person name="Roest Crollius H."/>
            <person name="Rogers J."/>
            <person name="Stemple D.L."/>
        </authorList>
    </citation>
    <scope>NUCLEOTIDE SEQUENCE [LARGE SCALE GENOMIC DNA]</scope>
    <source>
        <strain>Tuebingen</strain>
    </source>
</reference>
<name>TERB1_DANRE</name>
<sequence>MEATKTDLRLLLECLKYQMKWPGSQKQALLTIISICKQNDQYVEFLREIGGISFIYNLSKSSTFSQVKETALFTLASLAELHESCKQALCREEMFRDFVQHLEQEMPLTEKRVAVYMLSVLVANNRCGQTLAKTSRCIEALLRLFRQSFPVPGESYEQLQLWITVSSALCGSVNNPQNEENQNVCMSVFPEIKPWLQEVALPRAELAQPLCSFIGMTVANNPCAQEYFVSVGGLDSLSDTLTRVLSQSTHSASVCKMATIITKTLSACISNNELLGSSLSKLRVIPGLLRLLSSPNLDPQDQLAVVLTTGHLTDACVEQQSQLLSAGGLPIIITLLTETSDEELKKAAIFVLHTCNRITESLGPGMSTIDPNECDREGQWRSAGQILQRIQLLEKKIGKKLWERDPESQPHSMKRSDSHVECDDELWEGSVMRKVKGNHRVYGEFRAIPAGTPITSEILQDQDSLQPDSSEEGLSPVQVNLFKGPNWEKSKKRKHKQKRENERSDNQETRREGVNKRELKRNVKSERVVKRLKMMNLESDDDGYELLQNCSTPTEGNRDTQGPDIFRHPDPVKRNQREPSLSDDNMSLCTELLDKEINKFLKPPSASKSNTLRCAGCVKHMNELNSRSFGAVLSSCRFQCDFHLTLREAEDRFRRSQPLKRTSHTPTHTHINTHRKIREHSTSAQEHKQKSKREKHKLSHQSSDRCYRLTPLRRPRETYSPDVKQWTDHRHLKKSSEDARSKNSSGRHRKRQNWSDKELCYLTKGVKRFGHSWNTILWKYPFHPGRTNVDLAKKFYHMQKAKAQGVDLSVAKAL</sequence>